<accession>B5F9W4</accession>
<reference key="1">
    <citation type="submission" date="2008-08" db="EMBL/GenBank/DDBJ databases">
        <title>Complete sequence of Vibrio fischeri strain MJ11.</title>
        <authorList>
            <person name="Mandel M.J."/>
            <person name="Stabb E.V."/>
            <person name="Ruby E.G."/>
            <person name="Ferriera S."/>
            <person name="Johnson J."/>
            <person name="Kravitz S."/>
            <person name="Beeson K."/>
            <person name="Sutton G."/>
            <person name="Rogers Y.-H."/>
            <person name="Friedman R."/>
            <person name="Frazier M."/>
            <person name="Venter J.C."/>
        </authorList>
    </citation>
    <scope>NUCLEOTIDE SEQUENCE [LARGE SCALE GENOMIC DNA]</scope>
    <source>
        <strain>MJ11</strain>
    </source>
</reference>
<evidence type="ECO:0000255" key="1">
    <source>
        <dbReference type="HAMAP-Rule" id="MF_00387"/>
    </source>
</evidence>
<dbReference type="EC" id="2.3.1.129" evidence="1"/>
<dbReference type="EMBL" id="CP001139">
    <property type="protein sequence ID" value="ACH66581.1"/>
    <property type="molecule type" value="Genomic_DNA"/>
</dbReference>
<dbReference type="RefSeq" id="WP_005420540.1">
    <property type="nucleotide sequence ID" value="NC_011184.1"/>
</dbReference>
<dbReference type="SMR" id="B5F9W4"/>
<dbReference type="GeneID" id="54164646"/>
<dbReference type="KEGG" id="vfm:VFMJ11_2084"/>
<dbReference type="HOGENOM" id="CLU_061249_0_0_6"/>
<dbReference type="UniPathway" id="UPA00359">
    <property type="reaction ID" value="UER00477"/>
</dbReference>
<dbReference type="Proteomes" id="UP000001857">
    <property type="component" value="Chromosome I"/>
</dbReference>
<dbReference type="GO" id="GO:0005737">
    <property type="term" value="C:cytoplasm"/>
    <property type="evidence" value="ECO:0007669"/>
    <property type="project" value="UniProtKB-SubCell"/>
</dbReference>
<dbReference type="GO" id="GO:0016020">
    <property type="term" value="C:membrane"/>
    <property type="evidence" value="ECO:0007669"/>
    <property type="project" value="GOC"/>
</dbReference>
<dbReference type="GO" id="GO:0008780">
    <property type="term" value="F:acyl-[acyl-carrier-protein]-UDP-N-acetylglucosamine O-acyltransferase activity"/>
    <property type="evidence" value="ECO:0007669"/>
    <property type="project" value="UniProtKB-UniRule"/>
</dbReference>
<dbReference type="GO" id="GO:0009245">
    <property type="term" value="P:lipid A biosynthetic process"/>
    <property type="evidence" value="ECO:0007669"/>
    <property type="project" value="UniProtKB-UniRule"/>
</dbReference>
<dbReference type="CDD" id="cd03351">
    <property type="entry name" value="LbH_UDP-GlcNAc_AT"/>
    <property type="match status" value="1"/>
</dbReference>
<dbReference type="Gene3D" id="2.160.10.10">
    <property type="entry name" value="Hexapeptide repeat proteins"/>
    <property type="match status" value="1"/>
</dbReference>
<dbReference type="Gene3D" id="1.20.1180.10">
    <property type="entry name" value="Udp N-acetylglucosamine O-acyltransferase, C-terminal domain"/>
    <property type="match status" value="1"/>
</dbReference>
<dbReference type="HAMAP" id="MF_00387">
    <property type="entry name" value="LpxA"/>
    <property type="match status" value="1"/>
</dbReference>
<dbReference type="InterPro" id="IPR029098">
    <property type="entry name" value="Acetyltransf_C"/>
</dbReference>
<dbReference type="InterPro" id="IPR037157">
    <property type="entry name" value="Acetyltransf_C_sf"/>
</dbReference>
<dbReference type="InterPro" id="IPR001451">
    <property type="entry name" value="Hexapep"/>
</dbReference>
<dbReference type="InterPro" id="IPR010137">
    <property type="entry name" value="Lipid_A_LpxA"/>
</dbReference>
<dbReference type="InterPro" id="IPR011004">
    <property type="entry name" value="Trimer_LpxA-like_sf"/>
</dbReference>
<dbReference type="NCBIfam" id="TIGR01852">
    <property type="entry name" value="lipid_A_lpxA"/>
    <property type="match status" value="1"/>
</dbReference>
<dbReference type="NCBIfam" id="NF003657">
    <property type="entry name" value="PRK05289.1"/>
    <property type="match status" value="1"/>
</dbReference>
<dbReference type="PANTHER" id="PTHR43480">
    <property type="entry name" value="ACYL-[ACYL-CARRIER-PROTEIN]--UDP-N-ACETYLGLUCOSAMINE O-ACYLTRANSFERASE"/>
    <property type="match status" value="1"/>
</dbReference>
<dbReference type="PANTHER" id="PTHR43480:SF1">
    <property type="entry name" value="ACYL-[ACYL-CARRIER-PROTEIN]--UDP-N-ACETYLGLUCOSAMINE O-ACYLTRANSFERASE, MITOCHONDRIAL-RELATED"/>
    <property type="match status" value="1"/>
</dbReference>
<dbReference type="Pfam" id="PF13720">
    <property type="entry name" value="Acetyltransf_11"/>
    <property type="match status" value="1"/>
</dbReference>
<dbReference type="Pfam" id="PF00132">
    <property type="entry name" value="Hexapep"/>
    <property type="match status" value="1"/>
</dbReference>
<dbReference type="PIRSF" id="PIRSF000456">
    <property type="entry name" value="UDP-GlcNAc_acltr"/>
    <property type="match status" value="1"/>
</dbReference>
<dbReference type="SUPFAM" id="SSF51161">
    <property type="entry name" value="Trimeric LpxA-like enzymes"/>
    <property type="match status" value="1"/>
</dbReference>
<gene>
    <name evidence="1" type="primary">lpxA</name>
    <name type="ordered locus">VFMJ11_2084</name>
</gene>
<comment type="function">
    <text evidence="1">Involved in the biosynthesis of lipid A, a phosphorylated glycolipid that anchors the lipopolysaccharide to the outer membrane of the cell.</text>
</comment>
<comment type="catalytic activity">
    <reaction evidence="1">
        <text>a (3R)-hydroxyacyl-[ACP] + UDP-N-acetyl-alpha-D-glucosamine = a UDP-3-O-[(3R)-3-hydroxyacyl]-N-acetyl-alpha-D-glucosamine + holo-[ACP]</text>
        <dbReference type="Rhea" id="RHEA:67812"/>
        <dbReference type="Rhea" id="RHEA-COMP:9685"/>
        <dbReference type="Rhea" id="RHEA-COMP:9945"/>
        <dbReference type="ChEBI" id="CHEBI:57705"/>
        <dbReference type="ChEBI" id="CHEBI:64479"/>
        <dbReference type="ChEBI" id="CHEBI:78827"/>
        <dbReference type="ChEBI" id="CHEBI:173225"/>
        <dbReference type="EC" id="2.3.1.129"/>
    </reaction>
</comment>
<comment type="pathway">
    <text evidence="1">Glycolipid biosynthesis; lipid IV(A) biosynthesis; lipid IV(A) from (3R)-3-hydroxytetradecanoyl-[acyl-carrier-protein] and UDP-N-acetyl-alpha-D-glucosamine: step 1/6.</text>
</comment>
<comment type="subunit">
    <text evidence="1">Homotrimer.</text>
</comment>
<comment type="subcellular location">
    <subcellularLocation>
        <location evidence="1">Cytoplasm</location>
    </subcellularLocation>
</comment>
<comment type="similarity">
    <text evidence="1">Belongs to the transferase hexapeptide repeat family. LpxA subfamily.</text>
</comment>
<keyword id="KW-0012">Acyltransferase</keyword>
<keyword id="KW-0963">Cytoplasm</keyword>
<keyword id="KW-0441">Lipid A biosynthesis</keyword>
<keyword id="KW-0444">Lipid biosynthesis</keyword>
<keyword id="KW-0443">Lipid metabolism</keyword>
<keyword id="KW-0677">Repeat</keyword>
<keyword id="KW-0808">Transferase</keyword>
<organism>
    <name type="scientific">Aliivibrio fischeri (strain MJ11)</name>
    <name type="common">Vibrio fischeri</name>
    <dbReference type="NCBI Taxonomy" id="388396"/>
    <lineage>
        <taxon>Bacteria</taxon>
        <taxon>Pseudomonadati</taxon>
        <taxon>Pseudomonadota</taxon>
        <taxon>Gammaproteobacteria</taxon>
        <taxon>Vibrionales</taxon>
        <taxon>Vibrionaceae</taxon>
        <taxon>Aliivibrio</taxon>
    </lineage>
</organism>
<proteinExistence type="inferred from homology"/>
<sequence>MIHETAKIHPSAVIEGNVTIEANVSVGPFTYISGNVTIGEGTEVMSHVVIKGDTTIGKDNRIFAFAIIGEESQDKKYGGEATTVVIGDRNVIRESVQIHRGTVQDRGVTTVGSDNLLCVNVHIAHDCVVGDNIIMGNNATLAGHVTVEDFAIVSALSPVHQFCTVGAHSFIGGASVVVQDVPPFVMAQGNHCKPFGINIEGLKRRGFEKAEIHAIRRAYKALYRNGNTLEEAKVEINKEIEAFPVLQGFLDLFEKSTRGIIR</sequence>
<name>LPXA_ALIFM</name>
<protein>
    <recommendedName>
        <fullName evidence="1">Acyl-[acyl-carrier-protein]--UDP-N-acetylglucosamine O-acyltransferase</fullName>
        <shortName evidence="1">UDP-N-acetylglucosamine acyltransferase</shortName>
        <ecNumber evidence="1">2.3.1.129</ecNumber>
    </recommendedName>
</protein>
<feature type="chain" id="PRO_1000190866" description="Acyl-[acyl-carrier-protein]--UDP-N-acetylglucosamine O-acyltransferase">
    <location>
        <begin position="1"/>
        <end position="262"/>
    </location>
</feature>